<organism>
    <name type="scientific">Pseudoalteromonas atlantica (strain T6c / ATCC BAA-1087)</name>
    <dbReference type="NCBI Taxonomy" id="3042615"/>
    <lineage>
        <taxon>Bacteria</taxon>
        <taxon>Pseudomonadati</taxon>
        <taxon>Pseudomonadota</taxon>
        <taxon>Gammaproteobacteria</taxon>
        <taxon>Alteromonadales</taxon>
        <taxon>Alteromonadaceae</taxon>
        <taxon>Paraglaciecola</taxon>
    </lineage>
</organism>
<dbReference type="EC" id="2.2.1.7" evidence="1"/>
<dbReference type="EMBL" id="CP000388">
    <property type="protein sequence ID" value="ABG39845.1"/>
    <property type="molecule type" value="Genomic_DNA"/>
</dbReference>
<dbReference type="RefSeq" id="WP_011574167.1">
    <property type="nucleotide sequence ID" value="NC_008228.1"/>
</dbReference>
<dbReference type="SMR" id="Q15W93"/>
<dbReference type="STRING" id="342610.Patl_1319"/>
<dbReference type="KEGG" id="pat:Patl_1319"/>
<dbReference type="eggNOG" id="COG1154">
    <property type="taxonomic scope" value="Bacteria"/>
</dbReference>
<dbReference type="HOGENOM" id="CLU_009227_1_4_6"/>
<dbReference type="OrthoDB" id="9803371at2"/>
<dbReference type="UniPathway" id="UPA00064">
    <property type="reaction ID" value="UER00091"/>
</dbReference>
<dbReference type="Proteomes" id="UP000001981">
    <property type="component" value="Chromosome"/>
</dbReference>
<dbReference type="GO" id="GO:0005829">
    <property type="term" value="C:cytosol"/>
    <property type="evidence" value="ECO:0007669"/>
    <property type="project" value="TreeGrafter"/>
</dbReference>
<dbReference type="GO" id="GO:0008661">
    <property type="term" value="F:1-deoxy-D-xylulose-5-phosphate synthase activity"/>
    <property type="evidence" value="ECO:0007669"/>
    <property type="project" value="UniProtKB-UniRule"/>
</dbReference>
<dbReference type="GO" id="GO:0000287">
    <property type="term" value="F:magnesium ion binding"/>
    <property type="evidence" value="ECO:0007669"/>
    <property type="project" value="UniProtKB-UniRule"/>
</dbReference>
<dbReference type="GO" id="GO:0030976">
    <property type="term" value="F:thiamine pyrophosphate binding"/>
    <property type="evidence" value="ECO:0007669"/>
    <property type="project" value="UniProtKB-UniRule"/>
</dbReference>
<dbReference type="GO" id="GO:0052865">
    <property type="term" value="P:1-deoxy-D-xylulose 5-phosphate biosynthetic process"/>
    <property type="evidence" value="ECO:0007669"/>
    <property type="project" value="UniProtKB-UniPathway"/>
</dbReference>
<dbReference type="GO" id="GO:0019288">
    <property type="term" value="P:isopentenyl diphosphate biosynthetic process, methylerythritol 4-phosphate pathway"/>
    <property type="evidence" value="ECO:0007669"/>
    <property type="project" value="TreeGrafter"/>
</dbReference>
<dbReference type="GO" id="GO:0016114">
    <property type="term" value="P:terpenoid biosynthetic process"/>
    <property type="evidence" value="ECO:0007669"/>
    <property type="project" value="UniProtKB-UniRule"/>
</dbReference>
<dbReference type="GO" id="GO:0009228">
    <property type="term" value="P:thiamine biosynthetic process"/>
    <property type="evidence" value="ECO:0007669"/>
    <property type="project" value="UniProtKB-UniRule"/>
</dbReference>
<dbReference type="CDD" id="cd02007">
    <property type="entry name" value="TPP_DXS"/>
    <property type="match status" value="1"/>
</dbReference>
<dbReference type="CDD" id="cd07033">
    <property type="entry name" value="TPP_PYR_DXS_TK_like"/>
    <property type="match status" value="1"/>
</dbReference>
<dbReference type="FunFam" id="3.40.50.920:FF:000002">
    <property type="entry name" value="1-deoxy-D-xylulose-5-phosphate synthase"/>
    <property type="match status" value="1"/>
</dbReference>
<dbReference type="FunFam" id="3.40.50.970:FF:000005">
    <property type="entry name" value="1-deoxy-D-xylulose-5-phosphate synthase"/>
    <property type="match status" value="1"/>
</dbReference>
<dbReference type="Gene3D" id="3.40.50.920">
    <property type="match status" value="1"/>
</dbReference>
<dbReference type="Gene3D" id="3.40.50.970">
    <property type="match status" value="2"/>
</dbReference>
<dbReference type="HAMAP" id="MF_00315">
    <property type="entry name" value="DXP_synth"/>
    <property type="match status" value="1"/>
</dbReference>
<dbReference type="InterPro" id="IPR005477">
    <property type="entry name" value="Dxylulose-5-P_synthase"/>
</dbReference>
<dbReference type="InterPro" id="IPR029061">
    <property type="entry name" value="THDP-binding"/>
</dbReference>
<dbReference type="InterPro" id="IPR009014">
    <property type="entry name" value="Transketo_C/PFOR_II"/>
</dbReference>
<dbReference type="InterPro" id="IPR005475">
    <property type="entry name" value="Transketolase-like_Pyr-bd"/>
</dbReference>
<dbReference type="InterPro" id="IPR020826">
    <property type="entry name" value="Transketolase_BS"/>
</dbReference>
<dbReference type="InterPro" id="IPR033248">
    <property type="entry name" value="Transketolase_C"/>
</dbReference>
<dbReference type="InterPro" id="IPR049557">
    <property type="entry name" value="Transketolase_CS"/>
</dbReference>
<dbReference type="NCBIfam" id="TIGR00204">
    <property type="entry name" value="dxs"/>
    <property type="match status" value="1"/>
</dbReference>
<dbReference type="NCBIfam" id="NF003933">
    <property type="entry name" value="PRK05444.2-2"/>
    <property type="match status" value="1"/>
</dbReference>
<dbReference type="PANTHER" id="PTHR43322">
    <property type="entry name" value="1-D-DEOXYXYLULOSE 5-PHOSPHATE SYNTHASE-RELATED"/>
    <property type="match status" value="1"/>
</dbReference>
<dbReference type="PANTHER" id="PTHR43322:SF5">
    <property type="entry name" value="1-DEOXY-D-XYLULOSE-5-PHOSPHATE SYNTHASE, CHLOROPLASTIC"/>
    <property type="match status" value="1"/>
</dbReference>
<dbReference type="Pfam" id="PF13292">
    <property type="entry name" value="DXP_synthase_N"/>
    <property type="match status" value="1"/>
</dbReference>
<dbReference type="Pfam" id="PF02779">
    <property type="entry name" value="Transket_pyr"/>
    <property type="match status" value="1"/>
</dbReference>
<dbReference type="Pfam" id="PF02780">
    <property type="entry name" value="Transketolase_C"/>
    <property type="match status" value="1"/>
</dbReference>
<dbReference type="SMART" id="SM00861">
    <property type="entry name" value="Transket_pyr"/>
    <property type="match status" value="1"/>
</dbReference>
<dbReference type="SUPFAM" id="SSF52518">
    <property type="entry name" value="Thiamin diphosphate-binding fold (THDP-binding)"/>
    <property type="match status" value="2"/>
</dbReference>
<dbReference type="SUPFAM" id="SSF52922">
    <property type="entry name" value="TK C-terminal domain-like"/>
    <property type="match status" value="1"/>
</dbReference>
<dbReference type="PROSITE" id="PS00801">
    <property type="entry name" value="TRANSKETOLASE_1"/>
    <property type="match status" value="1"/>
</dbReference>
<dbReference type="PROSITE" id="PS00802">
    <property type="entry name" value="TRANSKETOLASE_2"/>
    <property type="match status" value="1"/>
</dbReference>
<proteinExistence type="inferred from homology"/>
<evidence type="ECO:0000255" key="1">
    <source>
        <dbReference type="HAMAP-Rule" id="MF_00315"/>
    </source>
</evidence>
<feature type="chain" id="PRO_1000019060" description="1-deoxy-D-xylulose-5-phosphate synthase">
    <location>
        <begin position="1"/>
        <end position="621"/>
    </location>
</feature>
<feature type="binding site" evidence="1">
    <location>
        <position position="80"/>
    </location>
    <ligand>
        <name>thiamine diphosphate</name>
        <dbReference type="ChEBI" id="CHEBI:58937"/>
    </ligand>
</feature>
<feature type="binding site" evidence="1">
    <location>
        <begin position="121"/>
        <end position="123"/>
    </location>
    <ligand>
        <name>thiamine diphosphate</name>
        <dbReference type="ChEBI" id="CHEBI:58937"/>
    </ligand>
</feature>
<feature type="binding site" evidence="1">
    <location>
        <position position="152"/>
    </location>
    <ligand>
        <name>Mg(2+)</name>
        <dbReference type="ChEBI" id="CHEBI:18420"/>
    </ligand>
</feature>
<feature type="binding site" evidence="1">
    <location>
        <begin position="153"/>
        <end position="154"/>
    </location>
    <ligand>
        <name>thiamine diphosphate</name>
        <dbReference type="ChEBI" id="CHEBI:58937"/>
    </ligand>
</feature>
<feature type="binding site" evidence="1">
    <location>
        <position position="181"/>
    </location>
    <ligand>
        <name>Mg(2+)</name>
        <dbReference type="ChEBI" id="CHEBI:18420"/>
    </ligand>
</feature>
<feature type="binding site" evidence="1">
    <location>
        <position position="181"/>
    </location>
    <ligand>
        <name>thiamine diphosphate</name>
        <dbReference type="ChEBI" id="CHEBI:58937"/>
    </ligand>
</feature>
<feature type="binding site" evidence="1">
    <location>
        <position position="288"/>
    </location>
    <ligand>
        <name>thiamine diphosphate</name>
        <dbReference type="ChEBI" id="CHEBI:58937"/>
    </ligand>
</feature>
<feature type="binding site" evidence="1">
    <location>
        <position position="370"/>
    </location>
    <ligand>
        <name>thiamine diphosphate</name>
        <dbReference type="ChEBI" id="CHEBI:58937"/>
    </ligand>
</feature>
<sequence length="621" mass="67453">MTLDLAHYPLLALADTPEQLRELPQDKLKQVAKELRQYLLTSVSQSSGHFASGLGTVELTVALHYVYNTPFDRLIWDVGHQAYPHKILTGRRDRMPTIRQKNGLHPFPWPNESEYDTFAVGHSSTSISAAVGMAVAAEKEALGRKVVAVIGDGAMTAGMAFEALNHGGDIDKDMLVILNDNEMSISENVGALNSHLARLLTGNFFNSIRDGGKKLLSSVPPIKEFASRAEEHIKGMVVPGTIFEELGFNYIGPIDGHDVNGVVDTLKNMRNIKGAQILHVVTKKGKGYELAEKDPIKFHAVPKFNPSADGLPKAAPSDPTFSNIFGRWLCDMAQQDPNLMAVTPAMREGSGMVEFSQKFPAQYFDVAIAEQHAVTFAAGLAKEGQNAVVAIYSTFLQRAYDQLIHDVALQNLPVLFAIDRAGLVGADGPTHQGAFDIPFLRCIPNMVIMTPADENECRQMLYTGHKLNKPAAVRYPRGSGTGVKPDNTMQALEIGKSRTIRQGEKVAILNFGVLLPYAEKAAEVLNATVIDMRFVKPLDTEAVANVAKNHELLITLEDGATTGGAGGAVAEYLLSTVHTSRLLQIGLPDEFIMQGTQTEMYAEIGMDDAGIIAKAHTFLAQ</sequence>
<protein>
    <recommendedName>
        <fullName evidence="1">1-deoxy-D-xylulose-5-phosphate synthase</fullName>
        <ecNumber evidence="1">2.2.1.7</ecNumber>
    </recommendedName>
    <alternativeName>
        <fullName evidence="1">1-deoxyxylulose-5-phosphate synthase</fullName>
        <shortName evidence="1">DXP synthase</shortName>
        <shortName evidence="1">DXPS</shortName>
    </alternativeName>
</protein>
<comment type="function">
    <text evidence="1">Catalyzes the acyloin condensation reaction between C atoms 2 and 3 of pyruvate and glyceraldehyde 3-phosphate to yield 1-deoxy-D-xylulose-5-phosphate (DXP).</text>
</comment>
<comment type="catalytic activity">
    <reaction evidence="1">
        <text>D-glyceraldehyde 3-phosphate + pyruvate + H(+) = 1-deoxy-D-xylulose 5-phosphate + CO2</text>
        <dbReference type="Rhea" id="RHEA:12605"/>
        <dbReference type="ChEBI" id="CHEBI:15361"/>
        <dbReference type="ChEBI" id="CHEBI:15378"/>
        <dbReference type="ChEBI" id="CHEBI:16526"/>
        <dbReference type="ChEBI" id="CHEBI:57792"/>
        <dbReference type="ChEBI" id="CHEBI:59776"/>
        <dbReference type="EC" id="2.2.1.7"/>
    </reaction>
</comment>
<comment type="cofactor">
    <cofactor evidence="1">
        <name>Mg(2+)</name>
        <dbReference type="ChEBI" id="CHEBI:18420"/>
    </cofactor>
    <text evidence="1">Binds 1 Mg(2+) ion per subunit.</text>
</comment>
<comment type="cofactor">
    <cofactor evidence="1">
        <name>thiamine diphosphate</name>
        <dbReference type="ChEBI" id="CHEBI:58937"/>
    </cofactor>
    <text evidence="1">Binds 1 thiamine pyrophosphate per subunit.</text>
</comment>
<comment type="pathway">
    <text evidence="1">Metabolic intermediate biosynthesis; 1-deoxy-D-xylulose 5-phosphate biosynthesis; 1-deoxy-D-xylulose 5-phosphate from D-glyceraldehyde 3-phosphate and pyruvate: step 1/1.</text>
</comment>
<comment type="subunit">
    <text evidence="1">Homodimer.</text>
</comment>
<comment type="similarity">
    <text evidence="1">Belongs to the transketolase family. DXPS subfamily.</text>
</comment>
<name>DXS_PSEA6</name>
<accession>Q15W93</accession>
<keyword id="KW-0414">Isoprene biosynthesis</keyword>
<keyword id="KW-0460">Magnesium</keyword>
<keyword id="KW-0479">Metal-binding</keyword>
<keyword id="KW-0784">Thiamine biosynthesis</keyword>
<keyword id="KW-0786">Thiamine pyrophosphate</keyword>
<keyword id="KW-0808">Transferase</keyword>
<reference key="1">
    <citation type="submission" date="2006-06" db="EMBL/GenBank/DDBJ databases">
        <title>Complete sequence of Pseudoalteromonas atlantica T6c.</title>
        <authorList>
            <consortium name="US DOE Joint Genome Institute"/>
            <person name="Copeland A."/>
            <person name="Lucas S."/>
            <person name="Lapidus A."/>
            <person name="Barry K."/>
            <person name="Detter J.C."/>
            <person name="Glavina del Rio T."/>
            <person name="Hammon N."/>
            <person name="Israni S."/>
            <person name="Dalin E."/>
            <person name="Tice H."/>
            <person name="Pitluck S."/>
            <person name="Saunders E."/>
            <person name="Brettin T."/>
            <person name="Bruce D."/>
            <person name="Han C."/>
            <person name="Tapia R."/>
            <person name="Gilna P."/>
            <person name="Schmutz J."/>
            <person name="Larimer F."/>
            <person name="Land M."/>
            <person name="Hauser L."/>
            <person name="Kyrpides N."/>
            <person name="Kim E."/>
            <person name="Karls A.C."/>
            <person name="Bartlett D."/>
            <person name="Higgins B.P."/>
            <person name="Richardson P."/>
        </authorList>
    </citation>
    <scope>NUCLEOTIDE SEQUENCE [LARGE SCALE GENOMIC DNA]</scope>
    <source>
        <strain>T6c / ATCC BAA-1087</strain>
    </source>
</reference>
<gene>
    <name evidence="1" type="primary">dxs</name>
    <name type="ordered locus">Patl_1319</name>
</gene>